<reference evidence="5" key="1">
    <citation type="journal article" date="1998" name="Science">
        <title>Genome sequence of the nematode C. elegans: a platform for investigating biology.</title>
        <authorList>
            <consortium name="The C. elegans sequencing consortium"/>
        </authorList>
    </citation>
    <scope>NUCLEOTIDE SEQUENCE [LARGE SCALE GENOMIC DNA]</scope>
    <source>
        <strain evidence="5">Bristol N2</strain>
    </source>
</reference>
<reference evidence="4" key="2">
    <citation type="journal article" date="2010" name="Mol. Biol. Cell">
        <title>MLT-10 defines a family of DUF644 and proline-rich repeat proteins involved in the molting cycle of Caenorhabditis elegans.</title>
        <authorList>
            <person name="Meli V.S."/>
            <person name="Osuna B."/>
            <person name="Ruvkun G."/>
            <person name="Frand A.R."/>
        </authorList>
    </citation>
    <scope>FUNCTION</scope>
    <scope>SUBCELLULAR LOCATION</scope>
    <scope>TISSUE SPECIFICITY</scope>
    <scope>DEVELOPMENTAL STAGE</scope>
    <scope>MUTAGENESIS OF GLY-348; HIS-590; GLY-597 AND TRP-688</scope>
</reference>
<comment type="function">
    <text evidence="3">Required for the efficient removal of larval cuticles during the molting cycle as well as the synthesis of new cuticles.</text>
</comment>
<comment type="subcellular location">
    <subcellularLocation>
        <location evidence="1">Membrane</location>
        <topology evidence="1">Multi-pass membrane protein</topology>
    </subcellularLocation>
    <subcellularLocation>
        <location evidence="3">Secreted</location>
    </subcellularLocation>
    <text evidence="3">Secreted from the hypodermis during molting.</text>
</comment>
<comment type="tissue specificity">
    <text evidence="3">Expressed in the major body hypodermal syncytium (Hyp7), the dorsal and ventral ridges of the hypodermis, hypodermal cells in the head and tail, and the pharyngeal myoepithelium, but not the lateral seam cells.</text>
</comment>
<comment type="developmental stage">
    <text evidence="3">In L4-stage larvae, first detected in the anterior hypodermis 3.5 hours before ecdysis with expression spreading throughout Hyp7 and intensifying for about 3 hours, dissipating at the end of lethargus and barely detectable 1 hour after ecdysis.</text>
</comment>
<comment type="similarity">
    <text evidence="4">Belongs to the mlt-10-like family.</text>
</comment>
<dbReference type="EMBL" id="BX284602">
    <property type="protein sequence ID" value="CCD63932.1"/>
    <property type="molecule type" value="Genomic_DNA"/>
</dbReference>
<dbReference type="PIR" id="T33321">
    <property type="entry name" value="T33321"/>
</dbReference>
<dbReference type="RefSeq" id="NP_493755.1">
    <property type="nucleotide sequence ID" value="NM_061354.5"/>
</dbReference>
<dbReference type="SMR" id="O76555"/>
<dbReference type="FunCoup" id="O76555">
    <property type="interactions" value="67"/>
</dbReference>
<dbReference type="STRING" id="6239.C09E8.3.1"/>
<dbReference type="PaxDb" id="6239-C09E8.3"/>
<dbReference type="PeptideAtlas" id="O76555"/>
<dbReference type="EnsemblMetazoa" id="C09E8.3.1">
    <property type="protein sequence ID" value="C09E8.3.1"/>
    <property type="gene ID" value="WBGene00015646"/>
</dbReference>
<dbReference type="GeneID" id="173445"/>
<dbReference type="KEGG" id="cel:CELE_C09E8.3"/>
<dbReference type="UCSC" id="C09E8.3.1">
    <property type="organism name" value="c. elegans"/>
</dbReference>
<dbReference type="AGR" id="WB:WBGene00015646"/>
<dbReference type="CTD" id="173445"/>
<dbReference type="WormBase" id="C09E8.3">
    <property type="protein sequence ID" value="CE19349"/>
    <property type="gene ID" value="WBGene00015646"/>
    <property type="gene designation" value="mlt-10"/>
</dbReference>
<dbReference type="eggNOG" id="ENOG502R8PH">
    <property type="taxonomic scope" value="Eukaryota"/>
</dbReference>
<dbReference type="GeneTree" id="ENSGT00390000020792"/>
<dbReference type="HOGENOM" id="CLU_010461_2_0_1"/>
<dbReference type="InParanoid" id="O76555"/>
<dbReference type="OMA" id="MIDNTPA"/>
<dbReference type="OrthoDB" id="5917548at2759"/>
<dbReference type="PhylomeDB" id="O76555"/>
<dbReference type="Proteomes" id="UP000001940">
    <property type="component" value="Chromosome II"/>
</dbReference>
<dbReference type="Bgee" id="WBGene00015646">
    <property type="expression patterns" value="Expressed in embryo and 4 other cell types or tissues"/>
</dbReference>
<dbReference type="GO" id="GO:0005615">
    <property type="term" value="C:extracellular space"/>
    <property type="evidence" value="ECO:0000314"/>
    <property type="project" value="WormBase"/>
</dbReference>
<dbReference type="GO" id="GO:0016020">
    <property type="term" value="C:membrane"/>
    <property type="evidence" value="ECO:0007669"/>
    <property type="project" value="UniProtKB-SubCell"/>
</dbReference>
<dbReference type="GO" id="GO:0042338">
    <property type="term" value="P:cuticle development involved in collagen and cuticulin-based cuticle molting cycle"/>
    <property type="evidence" value="ECO:0000315"/>
    <property type="project" value="WormBase"/>
</dbReference>
<dbReference type="GO" id="GO:0008544">
    <property type="term" value="P:epidermis development"/>
    <property type="evidence" value="ECO:0000315"/>
    <property type="project" value="WormBase"/>
</dbReference>
<dbReference type="InterPro" id="IPR006954">
    <property type="entry name" value="Mlt-10-like"/>
</dbReference>
<dbReference type="PANTHER" id="PTHR21523">
    <property type="match status" value="1"/>
</dbReference>
<dbReference type="PANTHER" id="PTHR21523:SF37">
    <property type="entry name" value="MLT-TEN (MLT-10) RELATED"/>
    <property type="match status" value="1"/>
</dbReference>
<dbReference type="Pfam" id="PF04870">
    <property type="entry name" value="Moulting_cycle"/>
    <property type="match status" value="1"/>
</dbReference>
<evidence type="ECO:0000255" key="1"/>
<evidence type="ECO:0000255" key="2">
    <source>
        <dbReference type="PROSITE-ProRule" id="PRU00498"/>
    </source>
</evidence>
<evidence type="ECO:0000269" key="3">
    <source>
    </source>
</evidence>
<evidence type="ECO:0000305" key="4"/>
<evidence type="ECO:0000312" key="5">
    <source>
        <dbReference type="Proteomes" id="UP000001940"/>
    </source>
</evidence>
<evidence type="ECO:0000312" key="6">
    <source>
        <dbReference type="WormBase" id="C09E8.3"/>
    </source>
</evidence>
<organism evidence="5">
    <name type="scientific">Caenorhabditis elegans</name>
    <dbReference type="NCBI Taxonomy" id="6239"/>
    <lineage>
        <taxon>Eukaryota</taxon>
        <taxon>Metazoa</taxon>
        <taxon>Ecdysozoa</taxon>
        <taxon>Nematoda</taxon>
        <taxon>Chromadorea</taxon>
        <taxon>Rhabditida</taxon>
        <taxon>Rhabditina</taxon>
        <taxon>Rhabditomorpha</taxon>
        <taxon>Rhabditoidea</taxon>
        <taxon>Rhabditidae</taxon>
        <taxon>Peloderinae</taxon>
        <taxon>Caenorhabditis</taxon>
    </lineage>
</organism>
<gene>
    <name evidence="6" type="primary">mlt-10</name>
    <name evidence="6" type="ORF">C09E8.3</name>
</gene>
<accession>O76555</accession>
<sequence length="690" mass="77117">MRNLNLILFTALAAVTYANVQPHDISQNGAVKDGNHLRIDLNETSSVELMDKWLSQAFSGLMAAVASKKIAKMPAEHQNIVQQCSKDAKDVREHAKCLVKLLDAEKSGKLGRKQYQKVVKSPETIVLPENPKMLTKKDLEKAENAGAAENNENLEWIGSFGTARAKRSYKVVHRDSYALRSTDDVDGMTKLAKSLTNTVRAMKNKTERAEPWVEAVGRIKKLGEEAKREKKNREVMKKRLKQMIDNTPAEFVDPRKPVALKQAEMEDENNEIAKLMRKKEADEIRVPLKFLRKAVKTALMLGGQNVTDFDQKTLKMVSPRMMSIVPEQEDESLFNLLSPSLFSLHDEGEGIEKLTSLPHLLKKLDNHGQNAWMDFIVEAAGVSDEVTKTEKVFREKKEKELRGTDGVPLYFTKENATKILGNEEKSKIEVFEDLDKSYSEEQKKKLNDDGFAFLTEKQMERLYGKESPYKHTKALKKFKRLRDDPEKYIEKDIRALAEAEKFRVARRADIVSSPFILTPLTFASAPLSNTFIVLSPLVLSPITLSPAVLGPIILSPWVFVPLILSPRVLSPLIVNPLVFSPIILSPLVLHPLILVPGVFNPIILSPLVLSPLILSPQVFTPLILSPFALNPLILTPMVGSPLILSPFVLSPIILSPQALFAVVLSPYALSPLVESKLIAAEVVLSPSWLS</sequence>
<keyword id="KW-0175">Coiled coil</keyword>
<keyword id="KW-0217">Developmental protein</keyword>
<keyword id="KW-0325">Glycoprotein</keyword>
<keyword id="KW-0472">Membrane</keyword>
<keyword id="KW-1185">Reference proteome</keyword>
<keyword id="KW-0964">Secreted</keyword>
<keyword id="KW-0732">Signal</keyword>
<keyword id="KW-0812">Transmembrane</keyword>
<keyword id="KW-1133">Transmembrane helix</keyword>
<name>MLT10_CAEEL</name>
<feature type="signal peptide" evidence="1">
    <location>
        <begin position="1"/>
        <end position="18"/>
    </location>
</feature>
<feature type="chain" id="PRO_5004160014" description="Molting protein mlt-10" evidence="1">
    <location>
        <begin position="19"/>
        <end position="690"/>
    </location>
</feature>
<feature type="transmembrane region" description="Helical" evidence="1">
    <location>
        <begin position="514"/>
        <end position="534"/>
    </location>
</feature>
<feature type="transmembrane region" description="Helical" evidence="1">
    <location>
        <begin position="544"/>
        <end position="564"/>
    </location>
</feature>
<feature type="transmembrane region" description="Helical" evidence="1">
    <location>
        <begin position="579"/>
        <end position="599"/>
    </location>
</feature>
<feature type="transmembrane region" description="Helical" evidence="1">
    <location>
        <begin position="618"/>
        <end position="638"/>
    </location>
</feature>
<feature type="transmembrane region" description="Helical" evidence="1">
    <location>
        <begin position="643"/>
        <end position="663"/>
    </location>
</feature>
<feature type="coiled-coil region" evidence="1">
    <location>
        <begin position="219"/>
        <end position="285"/>
    </location>
</feature>
<feature type="glycosylation site" description="N-linked (GlcNAc...) asparagine" evidence="2">
    <location>
        <position position="42"/>
    </location>
</feature>
<feature type="glycosylation site" description="N-linked (GlcNAc...) asparagine" evidence="2">
    <location>
        <position position="204"/>
    </location>
</feature>
<feature type="glycosylation site" description="N-linked (GlcNAc...) asparagine" evidence="2">
    <location>
        <position position="305"/>
    </location>
</feature>
<feature type="glycosylation site" description="N-linked (GlcNAc...) asparagine" evidence="2">
    <location>
        <position position="415"/>
    </location>
</feature>
<feature type="mutagenesis site" description="In mg439; defective molting." evidence="3">
    <original>G</original>
    <variation>R</variation>
    <location>
        <position position="348"/>
    </location>
</feature>
<feature type="mutagenesis site" description="In mg364; causes a blockade of the molting cycle; 56% of homozygotes remain trapped in the larval cuticle when grown under standard culture conditions; an additional 22% arrest development but are not trapped in the cuticle; survivors develop slowly; increased permeability of the exoskeleton." evidence="3">
    <original>H</original>
    <variation>Y</variation>
    <location>
        <position position="590"/>
    </location>
</feature>
<feature type="mutagenesis site" description="In mg435; defective molting." evidence="3">
    <original>G</original>
    <variation>E</variation>
    <location>
        <position position="597"/>
    </location>
</feature>
<feature type="mutagenesis site" description="In mg417; defective molting." evidence="3">
    <original>G</original>
    <variation>R</variation>
    <location>
        <position position="597"/>
    </location>
</feature>
<feature type="mutagenesis site" description="In mg434; defective molting." evidence="3">
    <original>W</original>
    <variation>R</variation>
    <location>
        <position position="688"/>
    </location>
</feature>
<proteinExistence type="evidence at protein level"/>
<protein>
    <recommendedName>
        <fullName evidence="4">Molting protein mlt-10</fullName>
    </recommendedName>
</protein>